<evidence type="ECO:0000255" key="1">
    <source>
        <dbReference type="HAMAP-Rule" id="MF_00451"/>
    </source>
</evidence>
<protein>
    <recommendedName>
        <fullName evidence="1">Nucleoside diphosphate kinase</fullName>
        <shortName evidence="1">NDK</shortName>
        <shortName evidence="1">NDP kinase</shortName>
        <ecNumber evidence="1">2.7.4.6</ecNumber>
    </recommendedName>
    <alternativeName>
        <fullName evidence="1">Nucleoside-2-P kinase</fullName>
    </alternativeName>
</protein>
<comment type="function">
    <text evidence="1">Major role in the synthesis of nucleoside triphosphates other than ATP. The ATP gamma phosphate is transferred to the NDP beta phosphate via a ping-pong mechanism, using a phosphorylated active-site intermediate.</text>
</comment>
<comment type="catalytic activity">
    <reaction evidence="1">
        <text>a 2'-deoxyribonucleoside 5'-diphosphate + ATP = a 2'-deoxyribonucleoside 5'-triphosphate + ADP</text>
        <dbReference type="Rhea" id="RHEA:44640"/>
        <dbReference type="ChEBI" id="CHEBI:30616"/>
        <dbReference type="ChEBI" id="CHEBI:61560"/>
        <dbReference type="ChEBI" id="CHEBI:73316"/>
        <dbReference type="ChEBI" id="CHEBI:456216"/>
        <dbReference type="EC" id="2.7.4.6"/>
    </reaction>
</comment>
<comment type="catalytic activity">
    <reaction evidence="1">
        <text>a ribonucleoside 5'-diphosphate + ATP = a ribonucleoside 5'-triphosphate + ADP</text>
        <dbReference type="Rhea" id="RHEA:18113"/>
        <dbReference type="ChEBI" id="CHEBI:30616"/>
        <dbReference type="ChEBI" id="CHEBI:57930"/>
        <dbReference type="ChEBI" id="CHEBI:61557"/>
        <dbReference type="ChEBI" id="CHEBI:456216"/>
        <dbReference type="EC" id="2.7.4.6"/>
    </reaction>
</comment>
<comment type="cofactor">
    <cofactor evidence="1">
        <name>Mg(2+)</name>
        <dbReference type="ChEBI" id="CHEBI:18420"/>
    </cofactor>
</comment>
<comment type="subunit">
    <text evidence="1">Homotetramer.</text>
</comment>
<comment type="subcellular location">
    <subcellularLocation>
        <location evidence="1">Cytoplasm</location>
    </subcellularLocation>
</comment>
<comment type="similarity">
    <text evidence="1">Belongs to the NDK family.</text>
</comment>
<reference key="1">
    <citation type="journal article" date="2008" name="J. Bacteriol.">
        <title>The complete genome sequence of Actinobacillus pleuropneumoniae L20 (serotype 5b).</title>
        <authorList>
            <person name="Foote S.J."/>
            <person name="Bosse J.T."/>
            <person name="Bouevitch A.B."/>
            <person name="Langford P.R."/>
            <person name="Young N.M."/>
            <person name="Nash J.H.E."/>
        </authorList>
    </citation>
    <scope>NUCLEOTIDE SEQUENCE [LARGE SCALE GENOMIC DNA]</scope>
    <source>
        <strain>L20</strain>
    </source>
</reference>
<keyword id="KW-0067">ATP-binding</keyword>
<keyword id="KW-0963">Cytoplasm</keyword>
<keyword id="KW-0418">Kinase</keyword>
<keyword id="KW-0460">Magnesium</keyword>
<keyword id="KW-0479">Metal-binding</keyword>
<keyword id="KW-0546">Nucleotide metabolism</keyword>
<keyword id="KW-0547">Nucleotide-binding</keyword>
<keyword id="KW-0597">Phosphoprotein</keyword>
<keyword id="KW-1185">Reference proteome</keyword>
<keyword id="KW-0808">Transferase</keyword>
<proteinExistence type="inferred from homology"/>
<organism>
    <name type="scientific">Actinobacillus pleuropneumoniae serotype 5b (strain L20)</name>
    <dbReference type="NCBI Taxonomy" id="416269"/>
    <lineage>
        <taxon>Bacteria</taxon>
        <taxon>Pseudomonadati</taxon>
        <taxon>Pseudomonadota</taxon>
        <taxon>Gammaproteobacteria</taxon>
        <taxon>Pasteurellales</taxon>
        <taxon>Pasteurellaceae</taxon>
        <taxon>Actinobacillus</taxon>
    </lineage>
</organism>
<feature type="chain" id="PRO_1000026203" description="Nucleoside diphosphate kinase">
    <location>
        <begin position="1"/>
        <end position="138"/>
    </location>
</feature>
<feature type="active site" description="Pros-phosphohistidine intermediate" evidence="1">
    <location>
        <position position="116"/>
    </location>
</feature>
<feature type="binding site" evidence="1">
    <location>
        <position position="10"/>
    </location>
    <ligand>
        <name>ATP</name>
        <dbReference type="ChEBI" id="CHEBI:30616"/>
    </ligand>
</feature>
<feature type="binding site" evidence="1">
    <location>
        <position position="58"/>
    </location>
    <ligand>
        <name>ATP</name>
        <dbReference type="ChEBI" id="CHEBI:30616"/>
    </ligand>
</feature>
<feature type="binding site" evidence="1">
    <location>
        <position position="86"/>
    </location>
    <ligand>
        <name>ATP</name>
        <dbReference type="ChEBI" id="CHEBI:30616"/>
    </ligand>
</feature>
<feature type="binding site" evidence="1">
    <location>
        <position position="92"/>
    </location>
    <ligand>
        <name>ATP</name>
        <dbReference type="ChEBI" id="CHEBI:30616"/>
    </ligand>
</feature>
<feature type="binding site" evidence="1">
    <location>
        <position position="103"/>
    </location>
    <ligand>
        <name>ATP</name>
        <dbReference type="ChEBI" id="CHEBI:30616"/>
    </ligand>
</feature>
<feature type="binding site" evidence="1">
    <location>
        <position position="113"/>
    </location>
    <ligand>
        <name>ATP</name>
        <dbReference type="ChEBI" id="CHEBI:30616"/>
    </ligand>
</feature>
<gene>
    <name evidence="1" type="primary">ndk</name>
    <name type="ordered locus">APL_0351</name>
</gene>
<name>NDK_ACTP2</name>
<sequence length="138" mass="15343">MIQQTLCLIKPDATQRNLIGKILSHLEEAGLTIKALKKVQLNQEQAEGFYAEHQGKEFFAPLVEFMISAPIVAVVLEGENAIAHYRELMGATNPEQRKAGTIRALYAISGRENSVHGSDSEQSAKREIAYFFTPNEIL</sequence>
<accession>A3MZ69</accession>
<dbReference type="EC" id="2.7.4.6" evidence="1"/>
<dbReference type="EMBL" id="CP000569">
    <property type="protein sequence ID" value="ABN73455.1"/>
    <property type="molecule type" value="Genomic_DNA"/>
</dbReference>
<dbReference type="RefSeq" id="WP_005600451.1">
    <property type="nucleotide sequence ID" value="NC_009053.1"/>
</dbReference>
<dbReference type="SMR" id="A3MZ69"/>
<dbReference type="STRING" id="416269.APL_0351"/>
<dbReference type="EnsemblBacteria" id="ABN73455">
    <property type="protein sequence ID" value="ABN73455"/>
    <property type="gene ID" value="APL_0351"/>
</dbReference>
<dbReference type="KEGG" id="apl:APL_0351"/>
<dbReference type="eggNOG" id="COG0105">
    <property type="taxonomic scope" value="Bacteria"/>
</dbReference>
<dbReference type="HOGENOM" id="CLU_060216_8_1_6"/>
<dbReference type="Proteomes" id="UP000001432">
    <property type="component" value="Chromosome"/>
</dbReference>
<dbReference type="GO" id="GO:0005737">
    <property type="term" value="C:cytoplasm"/>
    <property type="evidence" value="ECO:0007669"/>
    <property type="project" value="UniProtKB-SubCell"/>
</dbReference>
<dbReference type="GO" id="GO:0005524">
    <property type="term" value="F:ATP binding"/>
    <property type="evidence" value="ECO:0007669"/>
    <property type="project" value="UniProtKB-UniRule"/>
</dbReference>
<dbReference type="GO" id="GO:0046872">
    <property type="term" value="F:metal ion binding"/>
    <property type="evidence" value="ECO:0007669"/>
    <property type="project" value="UniProtKB-KW"/>
</dbReference>
<dbReference type="GO" id="GO:0004550">
    <property type="term" value="F:nucleoside diphosphate kinase activity"/>
    <property type="evidence" value="ECO:0007669"/>
    <property type="project" value="UniProtKB-UniRule"/>
</dbReference>
<dbReference type="GO" id="GO:0006241">
    <property type="term" value="P:CTP biosynthetic process"/>
    <property type="evidence" value="ECO:0007669"/>
    <property type="project" value="UniProtKB-UniRule"/>
</dbReference>
<dbReference type="GO" id="GO:0006183">
    <property type="term" value="P:GTP biosynthetic process"/>
    <property type="evidence" value="ECO:0007669"/>
    <property type="project" value="UniProtKB-UniRule"/>
</dbReference>
<dbReference type="GO" id="GO:0006228">
    <property type="term" value="P:UTP biosynthetic process"/>
    <property type="evidence" value="ECO:0007669"/>
    <property type="project" value="UniProtKB-UniRule"/>
</dbReference>
<dbReference type="CDD" id="cd04413">
    <property type="entry name" value="NDPk_I"/>
    <property type="match status" value="1"/>
</dbReference>
<dbReference type="FunFam" id="3.30.70.141:FF:000003">
    <property type="entry name" value="Nucleoside diphosphate kinase"/>
    <property type="match status" value="1"/>
</dbReference>
<dbReference type="Gene3D" id="3.30.70.141">
    <property type="entry name" value="Nucleoside diphosphate kinase-like domain"/>
    <property type="match status" value="1"/>
</dbReference>
<dbReference type="HAMAP" id="MF_00451">
    <property type="entry name" value="NDP_kinase"/>
    <property type="match status" value="1"/>
</dbReference>
<dbReference type="InterPro" id="IPR034907">
    <property type="entry name" value="NDK-like_dom"/>
</dbReference>
<dbReference type="InterPro" id="IPR036850">
    <property type="entry name" value="NDK-like_dom_sf"/>
</dbReference>
<dbReference type="InterPro" id="IPR001564">
    <property type="entry name" value="Nucleoside_diP_kinase"/>
</dbReference>
<dbReference type="InterPro" id="IPR023005">
    <property type="entry name" value="Nucleoside_diP_kinase_AS"/>
</dbReference>
<dbReference type="NCBIfam" id="NF001908">
    <property type="entry name" value="PRK00668.1"/>
    <property type="match status" value="1"/>
</dbReference>
<dbReference type="PANTHER" id="PTHR46161">
    <property type="entry name" value="NUCLEOSIDE DIPHOSPHATE KINASE"/>
    <property type="match status" value="1"/>
</dbReference>
<dbReference type="PANTHER" id="PTHR46161:SF3">
    <property type="entry name" value="NUCLEOSIDE DIPHOSPHATE KINASE DDB_G0292928-RELATED"/>
    <property type="match status" value="1"/>
</dbReference>
<dbReference type="Pfam" id="PF00334">
    <property type="entry name" value="NDK"/>
    <property type="match status" value="1"/>
</dbReference>
<dbReference type="PRINTS" id="PR01243">
    <property type="entry name" value="NUCDPKINASE"/>
</dbReference>
<dbReference type="SMART" id="SM00562">
    <property type="entry name" value="NDK"/>
    <property type="match status" value="1"/>
</dbReference>
<dbReference type="SUPFAM" id="SSF54919">
    <property type="entry name" value="Nucleoside diphosphate kinase, NDK"/>
    <property type="match status" value="1"/>
</dbReference>
<dbReference type="PROSITE" id="PS00469">
    <property type="entry name" value="NDPK"/>
    <property type="match status" value="1"/>
</dbReference>
<dbReference type="PROSITE" id="PS51374">
    <property type="entry name" value="NDPK_LIKE"/>
    <property type="match status" value="1"/>
</dbReference>